<gene>
    <name evidence="1" type="primary">rimM</name>
    <name type="ordered locus">BU395</name>
</gene>
<name>RIMM_BUCAI</name>
<evidence type="ECO:0000255" key="1">
    <source>
        <dbReference type="HAMAP-Rule" id="MF_00014"/>
    </source>
</evidence>
<feature type="chain" id="PRO_0000163266" description="Ribosome maturation factor RimM">
    <location>
        <begin position="1"/>
        <end position="176"/>
    </location>
</feature>
<feature type="domain" description="PRC barrel" evidence="1">
    <location>
        <begin position="102"/>
        <end position="175"/>
    </location>
</feature>
<reference key="1">
    <citation type="journal article" date="2000" name="Nature">
        <title>Genome sequence of the endocellular bacterial symbiont of aphids Buchnera sp. APS.</title>
        <authorList>
            <person name="Shigenobu S."/>
            <person name="Watanabe H."/>
            <person name="Hattori M."/>
            <person name="Sakaki Y."/>
            <person name="Ishikawa H."/>
        </authorList>
    </citation>
    <scope>NUCLEOTIDE SEQUENCE [LARGE SCALE GENOMIC DNA]</scope>
    <source>
        <strain>APS</strain>
    </source>
</reference>
<accession>P57475</accession>
<sequence length="176" mass="21098">MINISINKPIQPLLIGKVGKSYGILGWINIFSFTEEQEKIFNYLPWFFFKEKNWTRIQIKNWKKYKNNFIVHIKDISDRSVVSQFTNADIIISKHTLPALKKNDYYWNDIINYKVFNIDQHYLGTVINLIRTRNNDILIVKNKLKIHQKNILIPFIDNKIIKNVNTDKKFILVQWD</sequence>
<comment type="function">
    <text evidence="1">An accessory protein needed during the final step in the assembly of 30S ribosomal subunit, possibly for assembly of the head region. Essential for efficient processing of 16S rRNA. May be needed both before and after RbfA during the maturation of 16S rRNA. It has affinity for free ribosomal 30S subunits but not for 70S ribosomes.</text>
</comment>
<comment type="subunit">
    <text evidence="1">Binds ribosomal protein uS19.</text>
</comment>
<comment type="subcellular location">
    <subcellularLocation>
        <location evidence="1">Cytoplasm</location>
    </subcellularLocation>
</comment>
<comment type="domain">
    <text evidence="1">The PRC barrel domain binds ribosomal protein uS19.</text>
</comment>
<comment type="similarity">
    <text evidence="1">Belongs to the RimM family.</text>
</comment>
<protein>
    <recommendedName>
        <fullName evidence="1">Ribosome maturation factor RimM</fullName>
    </recommendedName>
</protein>
<dbReference type="EMBL" id="BA000003">
    <property type="protein sequence ID" value="BAB13098.1"/>
    <property type="molecule type" value="Genomic_DNA"/>
</dbReference>
<dbReference type="RefSeq" id="NP_240212.1">
    <property type="nucleotide sequence ID" value="NC_002528.1"/>
</dbReference>
<dbReference type="RefSeq" id="WP_010896097.1">
    <property type="nucleotide sequence ID" value="NC_002528.1"/>
</dbReference>
<dbReference type="SMR" id="P57475"/>
<dbReference type="STRING" id="563178.BUAP5A_388"/>
<dbReference type="EnsemblBacteria" id="BAB13098">
    <property type="protein sequence ID" value="BAB13098"/>
    <property type="gene ID" value="BAB13098"/>
</dbReference>
<dbReference type="KEGG" id="buc:BU395"/>
<dbReference type="PATRIC" id="fig|107806.10.peg.409"/>
<dbReference type="eggNOG" id="COG0806">
    <property type="taxonomic scope" value="Bacteria"/>
</dbReference>
<dbReference type="HOGENOM" id="CLU_077636_1_0_6"/>
<dbReference type="Proteomes" id="UP000001806">
    <property type="component" value="Chromosome"/>
</dbReference>
<dbReference type="GO" id="GO:0005737">
    <property type="term" value="C:cytoplasm"/>
    <property type="evidence" value="ECO:0007669"/>
    <property type="project" value="UniProtKB-SubCell"/>
</dbReference>
<dbReference type="GO" id="GO:0005840">
    <property type="term" value="C:ribosome"/>
    <property type="evidence" value="ECO:0007669"/>
    <property type="project" value="InterPro"/>
</dbReference>
<dbReference type="GO" id="GO:0043022">
    <property type="term" value="F:ribosome binding"/>
    <property type="evidence" value="ECO:0007669"/>
    <property type="project" value="InterPro"/>
</dbReference>
<dbReference type="GO" id="GO:0042274">
    <property type="term" value="P:ribosomal small subunit biogenesis"/>
    <property type="evidence" value="ECO:0007669"/>
    <property type="project" value="UniProtKB-UniRule"/>
</dbReference>
<dbReference type="GO" id="GO:0006364">
    <property type="term" value="P:rRNA processing"/>
    <property type="evidence" value="ECO:0007669"/>
    <property type="project" value="UniProtKB-UniRule"/>
</dbReference>
<dbReference type="Gene3D" id="2.30.30.240">
    <property type="entry name" value="PRC-barrel domain"/>
    <property type="match status" value="1"/>
</dbReference>
<dbReference type="Gene3D" id="2.40.30.60">
    <property type="entry name" value="RimM"/>
    <property type="match status" value="1"/>
</dbReference>
<dbReference type="HAMAP" id="MF_00014">
    <property type="entry name" value="Ribosome_mat_RimM"/>
    <property type="match status" value="1"/>
</dbReference>
<dbReference type="InterPro" id="IPR027275">
    <property type="entry name" value="PRC-brl_dom"/>
</dbReference>
<dbReference type="InterPro" id="IPR011033">
    <property type="entry name" value="PRC_barrel-like_sf"/>
</dbReference>
<dbReference type="InterPro" id="IPR011961">
    <property type="entry name" value="RimM"/>
</dbReference>
<dbReference type="InterPro" id="IPR002676">
    <property type="entry name" value="RimM_N"/>
</dbReference>
<dbReference type="InterPro" id="IPR036976">
    <property type="entry name" value="RimM_N_sf"/>
</dbReference>
<dbReference type="InterPro" id="IPR009000">
    <property type="entry name" value="Transl_B-barrel_sf"/>
</dbReference>
<dbReference type="NCBIfam" id="TIGR02273">
    <property type="entry name" value="16S_RimM"/>
    <property type="match status" value="1"/>
</dbReference>
<dbReference type="PANTHER" id="PTHR33692">
    <property type="entry name" value="RIBOSOME MATURATION FACTOR RIMM"/>
    <property type="match status" value="1"/>
</dbReference>
<dbReference type="PANTHER" id="PTHR33692:SF1">
    <property type="entry name" value="RIBOSOME MATURATION FACTOR RIMM"/>
    <property type="match status" value="1"/>
</dbReference>
<dbReference type="Pfam" id="PF05239">
    <property type="entry name" value="PRC"/>
    <property type="match status" value="1"/>
</dbReference>
<dbReference type="Pfam" id="PF01782">
    <property type="entry name" value="RimM"/>
    <property type="match status" value="1"/>
</dbReference>
<dbReference type="SUPFAM" id="SSF50346">
    <property type="entry name" value="PRC-barrel domain"/>
    <property type="match status" value="1"/>
</dbReference>
<dbReference type="SUPFAM" id="SSF50447">
    <property type="entry name" value="Translation proteins"/>
    <property type="match status" value="1"/>
</dbReference>
<keyword id="KW-0143">Chaperone</keyword>
<keyword id="KW-0963">Cytoplasm</keyword>
<keyword id="KW-1185">Reference proteome</keyword>
<keyword id="KW-0690">Ribosome biogenesis</keyword>
<keyword id="KW-0698">rRNA processing</keyword>
<organism>
    <name type="scientific">Buchnera aphidicola subsp. Acyrthosiphon pisum (strain APS)</name>
    <name type="common">Acyrthosiphon pisum symbiotic bacterium</name>
    <dbReference type="NCBI Taxonomy" id="107806"/>
    <lineage>
        <taxon>Bacteria</taxon>
        <taxon>Pseudomonadati</taxon>
        <taxon>Pseudomonadota</taxon>
        <taxon>Gammaproteobacteria</taxon>
        <taxon>Enterobacterales</taxon>
        <taxon>Erwiniaceae</taxon>
        <taxon>Buchnera</taxon>
    </lineage>
</organism>
<proteinExistence type="inferred from homology"/>